<reference key="1">
    <citation type="journal article" date="2004" name="Nat. Biotechnol.">
        <title>The genome sequence of the anaerobic, sulfate-reducing bacterium Desulfovibrio vulgaris Hildenborough.</title>
        <authorList>
            <person name="Heidelberg J.F."/>
            <person name="Seshadri R."/>
            <person name="Haveman S.A."/>
            <person name="Hemme C.L."/>
            <person name="Paulsen I.T."/>
            <person name="Kolonay J.F."/>
            <person name="Eisen J.A."/>
            <person name="Ward N.L."/>
            <person name="Methe B.A."/>
            <person name="Brinkac L.M."/>
            <person name="Daugherty S.C."/>
            <person name="DeBoy R.T."/>
            <person name="Dodson R.J."/>
            <person name="Durkin A.S."/>
            <person name="Madupu R."/>
            <person name="Nelson W.C."/>
            <person name="Sullivan S.A."/>
            <person name="Fouts D.E."/>
            <person name="Haft D.H."/>
            <person name="Selengut J."/>
            <person name="Peterson J.D."/>
            <person name="Davidsen T.M."/>
            <person name="Zafar N."/>
            <person name="Zhou L."/>
            <person name="Radune D."/>
            <person name="Dimitrov G."/>
            <person name="Hance M."/>
            <person name="Tran K."/>
            <person name="Khouri H.M."/>
            <person name="Gill J."/>
            <person name="Utterback T.R."/>
            <person name="Feldblyum T.V."/>
            <person name="Wall J.D."/>
            <person name="Voordouw G."/>
            <person name="Fraser C.M."/>
        </authorList>
    </citation>
    <scope>NUCLEOTIDE SEQUENCE [LARGE SCALE GENOMIC DNA]</scope>
    <source>
        <strain>ATCC 29579 / DSM 644 / CCUG 34227 / NCIMB 8303 / VKM B-1760 / Hildenborough</strain>
    </source>
</reference>
<gene>
    <name evidence="1" type="primary">atpG</name>
    <name type="ordered locus">DVU_0776</name>
</gene>
<protein>
    <recommendedName>
        <fullName evidence="1">ATP synthase gamma chain</fullName>
    </recommendedName>
    <alternativeName>
        <fullName evidence="1">ATP synthase F1 sector gamma subunit</fullName>
    </alternativeName>
    <alternativeName>
        <fullName evidence="1">F-ATPase gamma subunit</fullName>
    </alternativeName>
</protein>
<keyword id="KW-0066">ATP synthesis</keyword>
<keyword id="KW-0997">Cell inner membrane</keyword>
<keyword id="KW-1003">Cell membrane</keyword>
<keyword id="KW-0139">CF(1)</keyword>
<keyword id="KW-0375">Hydrogen ion transport</keyword>
<keyword id="KW-0406">Ion transport</keyword>
<keyword id="KW-0472">Membrane</keyword>
<keyword id="KW-1185">Reference proteome</keyword>
<keyword id="KW-0813">Transport</keyword>
<evidence type="ECO:0000255" key="1">
    <source>
        <dbReference type="HAMAP-Rule" id="MF_00815"/>
    </source>
</evidence>
<organism>
    <name type="scientific">Nitratidesulfovibrio vulgaris (strain ATCC 29579 / DSM 644 / CCUG 34227 / NCIMB 8303 / VKM B-1760 / Hildenborough)</name>
    <name type="common">Desulfovibrio vulgaris</name>
    <dbReference type="NCBI Taxonomy" id="882"/>
    <lineage>
        <taxon>Bacteria</taxon>
        <taxon>Pseudomonadati</taxon>
        <taxon>Thermodesulfobacteriota</taxon>
        <taxon>Desulfovibrionia</taxon>
        <taxon>Desulfovibrionales</taxon>
        <taxon>Desulfovibrionaceae</taxon>
        <taxon>Nitratidesulfovibrio</taxon>
    </lineage>
</organism>
<accession>Q72E03</accession>
<proteinExistence type="evidence at protein level"/>
<sequence>MPSLKDVKVKIAGVKKTKQITKAMNMVASAKLRGAQQRIERFRPYAEKFYGMLGDLASKADGSAHPLLEVRDEIKTCGIVLATSDRGLCGSFNANLISTALKLAKQKAAEGKTVKFYCVGKKGRDTIRKADFEVVTAIADQMGSFDFQLANKLGLEVINHYLTGELDEVVLVYGEFVSTAKQLPITLPILPIASEKKDEAEAAPSKEYIYEPAVEGLLAELLPRFIKVQIYRGLLDTSASEHAARMAAMDNATRSCDDMIGALTLLFNKTRQASITRDLMDIVGGAEALKG</sequence>
<comment type="function">
    <text evidence="1">Produces ATP from ADP in the presence of a proton gradient across the membrane. The gamma chain is believed to be important in regulating ATPase activity and the flow of protons through the CF(0) complex.</text>
</comment>
<comment type="subunit">
    <text evidence="1">F-type ATPases have 2 components, CF(1) - the catalytic core - and CF(0) - the membrane proton channel. CF(1) has five subunits: alpha(3), beta(3), gamma(1), delta(1), epsilon(1). CF(0) has three main subunits: a, b and c.</text>
</comment>
<comment type="interaction">
    <interactant intactId="EBI-10070593">
        <id>Q72E03</id>
    </interactant>
    <interactant intactId="EBI-10070589">
        <id>Q72E02</id>
        <label>atpA</label>
    </interactant>
    <organismsDiffer>false</organismsDiffer>
    <experiments>3</experiments>
</comment>
<comment type="subcellular location">
    <subcellularLocation>
        <location evidence="1">Cell inner membrane</location>
        <topology evidence="1">Peripheral membrane protein</topology>
    </subcellularLocation>
</comment>
<comment type="similarity">
    <text evidence="1">Belongs to the ATPase gamma chain family.</text>
</comment>
<feature type="chain" id="PRO_0000073277" description="ATP synthase gamma chain">
    <location>
        <begin position="1"/>
        <end position="291"/>
    </location>
</feature>
<name>ATPG_NITV2</name>
<dbReference type="EMBL" id="AE017285">
    <property type="protein sequence ID" value="AAS95256.1"/>
    <property type="molecule type" value="Genomic_DNA"/>
</dbReference>
<dbReference type="RefSeq" id="WP_010938077.1">
    <property type="nucleotide sequence ID" value="NC_002937.3"/>
</dbReference>
<dbReference type="RefSeq" id="YP_009997.1">
    <property type="nucleotide sequence ID" value="NC_002937.3"/>
</dbReference>
<dbReference type="SMR" id="Q72E03"/>
<dbReference type="IntAct" id="Q72E03">
    <property type="interactions" value="3"/>
</dbReference>
<dbReference type="STRING" id="882.DVU_0776"/>
<dbReference type="PaxDb" id="882-DVU_0776"/>
<dbReference type="EnsemblBacteria" id="AAS95256">
    <property type="protein sequence ID" value="AAS95256"/>
    <property type="gene ID" value="DVU_0776"/>
</dbReference>
<dbReference type="KEGG" id="dvu:DVU_0776"/>
<dbReference type="PATRIC" id="fig|882.5.peg.731"/>
<dbReference type="eggNOG" id="COG0224">
    <property type="taxonomic scope" value="Bacteria"/>
</dbReference>
<dbReference type="HOGENOM" id="CLU_050669_0_1_7"/>
<dbReference type="OrthoDB" id="9812769at2"/>
<dbReference type="PhylomeDB" id="Q72E03"/>
<dbReference type="Proteomes" id="UP000002194">
    <property type="component" value="Chromosome"/>
</dbReference>
<dbReference type="GO" id="GO:0005886">
    <property type="term" value="C:plasma membrane"/>
    <property type="evidence" value="ECO:0007669"/>
    <property type="project" value="UniProtKB-SubCell"/>
</dbReference>
<dbReference type="GO" id="GO:0045259">
    <property type="term" value="C:proton-transporting ATP synthase complex"/>
    <property type="evidence" value="ECO:0007669"/>
    <property type="project" value="UniProtKB-KW"/>
</dbReference>
<dbReference type="GO" id="GO:0005524">
    <property type="term" value="F:ATP binding"/>
    <property type="evidence" value="ECO:0007669"/>
    <property type="project" value="UniProtKB-UniRule"/>
</dbReference>
<dbReference type="GO" id="GO:0046933">
    <property type="term" value="F:proton-transporting ATP synthase activity, rotational mechanism"/>
    <property type="evidence" value="ECO:0007669"/>
    <property type="project" value="UniProtKB-UniRule"/>
</dbReference>
<dbReference type="GO" id="GO:0042777">
    <property type="term" value="P:proton motive force-driven plasma membrane ATP synthesis"/>
    <property type="evidence" value="ECO:0007669"/>
    <property type="project" value="UniProtKB-UniRule"/>
</dbReference>
<dbReference type="CDD" id="cd12151">
    <property type="entry name" value="F1-ATPase_gamma"/>
    <property type="match status" value="1"/>
</dbReference>
<dbReference type="Gene3D" id="3.40.1380.10">
    <property type="match status" value="1"/>
</dbReference>
<dbReference type="Gene3D" id="1.10.287.80">
    <property type="entry name" value="ATP synthase, gamma subunit, helix hairpin domain"/>
    <property type="match status" value="2"/>
</dbReference>
<dbReference type="HAMAP" id="MF_00815">
    <property type="entry name" value="ATP_synth_gamma_bact"/>
    <property type="match status" value="1"/>
</dbReference>
<dbReference type="InterPro" id="IPR035968">
    <property type="entry name" value="ATP_synth_F1_ATPase_gsu"/>
</dbReference>
<dbReference type="InterPro" id="IPR000131">
    <property type="entry name" value="ATP_synth_F1_gsu"/>
</dbReference>
<dbReference type="NCBIfam" id="TIGR01146">
    <property type="entry name" value="ATPsyn_F1gamma"/>
    <property type="match status" value="1"/>
</dbReference>
<dbReference type="NCBIfam" id="NF009957">
    <property type="entry name" value="PRK13424.1"/>
    <property type="match status" value="1"/>
</dbReference>
<dbReference type="PANTHER" id="PTHR11693">
    <property type="entry name" value="ATP SYNTHASE GAMMA CHAIN"/>
    <property type="match status" value="1"/>
</dbReference>
<dbReference type="PANTHER" id="PTHR11693:SF22">
    <property type="entry name" value="ATP SYNTHASE SUBUNIT GAMMA, MITOCHONDRIAL"/>
    <property type="match status" value="1"/>
</dbReference>
<dbReference type="Pfam" id="PF00231">
    <property type="entry name" value="ATP-synt"/>
    <property type="match status" value="1"/>
</dbReference>
<dbReference type="PRINTS" id="PR00126">
    <property type="entry name" value="ATPASEGAMMA"/>
</dbReference>
<dbReference type="SUPFAM" id="SSF52943">
    <property type="entry name" value="ATP synthase (F1-ATPase), gamma subunit"/>
    <property type="match status" value="1"/>
</dbReference>